<sequence>MTDSTYDVARVRTYLQGLQTRIADALGALDGTPLATDIWQRGPAERLRGGGCTRILEGGRVFERAGIGFSDVAGDALPPSASAARPQLAGRGFEALGVSLVLHPRNPYCPTVHMNVRMLIATKPGEAPIFWFGGGMDLTPVYGFEDDARHFHRTCKDALDPFGAELYPRFKKWCDEYFFLKHRNEMRGVGGIFFDDFSEPGFERSFEMMQSVGDAFLPAYLPIVERRAALPYGERERDFQAYRRGRYVEFNLVFDRGTLFGLQSGGRTESILMSMPPVANWRYNWQPEPGSPEARLYSDFIVPRDWV</sequence>
<keyword id="KW-0963">Cytoplasm</keyword>
<keyword id="KW-0350">Heme biosynthesis</keyword>
<keyword id="KW-0479">Metal-binding</keyword>
<keyword id="KW-0560">Oxidoreductase</keyword>
<keyword id="KW-0627">Porphyrin biosynthesis</keyword>
<keyword id="KW-1185">Reference proteome</keyword>
<name>HEM6_BURM1</name>
<feature type="chain" id="PRO_1000119793" description="Oxygen-dependent coproporphyrinogen-III oxidase">
    <location>
        <begin position="1"/>
        <end position="307"/>
    </location>
</feature>
<feature type="region of interest" description="Important for dimerization" evidence="1">
    <location>
        <begin position="247"/>
        <end position="282"/>
    </location>
</feature>
<feature type="active site" description="Proton donor" evidence="1">
    <location>
        <position position="113"/>
    </location>
</feature>
<feature type="binding site" evidence="1">
    <location>
        <position position="99"/>
    </location>
    <ligand>
        <name>substrate</name>
    </ligand>
</feature>
<feature type="binding site" evidence="1">
    <location>
        <position position="103"/>
    </location>
    <ligand>
        <name>a divalent metal cation</name>
        <dbReference type="ChEBI" id="CHEBI:60240"/>
    </ligand>
</feature>
<feature type="binding site" evidence="1">
    <location>
        <position position="113"/>
    </location>
    <ligand>
        <name>a divalent metal cation</name>
        <dbReference type="ChEBI" id="CHEBI:60240"/>
    </ligand>
</feature>
<feature type="binding site" evidence="1">
    <location>
        <begin position="115"/>
        <end position="117"/>
    </location>
    <ligand>
        <name>substrate</name>
    </ligand>
</feature>
<feature type="binding site" evidence="1">
    <location>
        <position position="152"/>
    </location>
    <ligand>
        <name>a divalent metal cation</name>
        <dbReference type="ChEBI" id="CHEBI:60240"/>
    </ligand>
</feature>
<feature type="binding site" evidence="1">
    <location>
        <position position="182"/>
    </location>
    <ligand>
        <name>a divalent metal cation</name>
        <dbReference type="ChEBI" id="CHEBI:60240"/>
    </ligand>
</feature>
<feature type="binding site" evidence="1">
    <location>
        <begin position="265"/>
        <end position="267"/>
    </location>
    <ligand>
        <name>substrate</name>
    </ligand>
</feature>
<feature type="site" description="Important for dimerization" evidence="1">
    <location>
        <position position="182"/>
    </location>
</feature>
<accession>A9AJJ8</accession>
<proteinExistence type="inferred from homology"/>
<comment type="function">
    <text evidence="1">Involved in the heme biosynthesis. Catalyzes the aerobic oxidative decarboxylation of propionate groups of rings A and B of coproporphyrinogen-III to yield the vinyl groups in protoporphyrinogen-IX.</text>
</comment>
<comment type="catalytic activity">
    <reaction evidence="1">
        <text>coproporphyrinogen III + O2 + 2 H(+) = protoporphyrinogen IX + 2 CO2 + 2 H2O</text>
        <dbReference type="Rhea" id="RHEA:18257"/>
        <dbReference type="ChEBI" id="CHEBI:15377"/>
        <dbReference type="ChEBI" id="CHEBI:15378"/>
        <dbReference type="ChEBI" id="CHEBI:15379"/>
        <dbReference type="ChEBI" id="CHEBI:16526"/>
        <dbReference type="ChEBI" id="CHEBI:57307"/>
        <dbReference type="ChEBI" id="CHEBI:57309"/>
        <dbReference type="EC" id="1.3.3.3"/>
    </reaction>
</comment>
<comment type="cofactor">
    <cofactor evidence="1">
        <name>a divalent metal cation</name>
        <dbReference type="ChEBI" id="CHEBI:60240"/>
    </cofactor>
</comment>
<comment type="pathway">
    <text evidence="1">Porphyrin-containing compound metabolism; protoporphyrin-IX biosynthesis; protoporphyrinogen-IX from coproporphyrinogen-III (O2 route): step 1/1.</text>
</comment>
<comment type="subunit">
    <text evidence="1">Homodimer.</text>
</comment>
<comment type="subcellular location">
    <subcellularLocation>
        <location evidence="1">Cytoplasm</location>
    </subcellularLocation>
</comment>
<comment type="similarity">
    <text evidence="1">Belongs to the aerobic coproporphyrinogen-III oxidase family.</text>
</comment>
<reference key="1">
    <citation type="submission" date="2007-10" db="EMBL/GenBank/DDBJ databases">
        <title>Complete sequence of chromosome 1 of Burkholderia multivorans ATCC 17616.</title>
        <authorList>
            <person name="Copeland A."/>
            <person name="Lucas S."/>
            <person name="Lapidus A."/>
            <person name="Barry K."/>
            <person name="Glavina del Rio T."/>
            <person name="Dalin E."/>
            <person name="Tice H."/>
            <person name="Pitluck S."/>
            <person name="Chain P."/>
            <person name="Malfatti S."/>
            <person name="Shin M."/>
            <person name="Vergez L."/>
            <person name="Schmutz J."/>
            <person name="Larimer F."/>
            <person name="Land M."/>
            <person name="Hauser L."/>
            <person name="Kyrpides N."/>
            <person name="Kim E."/>
            <person name="Tiedje J."/>
            <person name="Richardson P."/>
        </authorList>
    </citation>
    <scope>NUCLEOTIDE SEQUENCE [LARGE SCALE GENOMIC DNA]</scope>
    <source>
        <strain>ATCC 17616 / 249</strain>
    </source>
</reference>
<reference key="2">
    <citation type="submission" date="2007-04" db="EMBL/GenBank/DDBJ databases">
        <title>Complete genome sequence of Burkholderia multivorans ATCC 17616.</title>
        <authorList>
            <person name="Ohtsubo Y."/>
            <person name="Yamashita A."/>
            <person name="Kurokawa K."/>
            <person name="Takami H."/>
            <person name="Yuhara S."/>
            <person name="Nishiyama E."/>
            <person name="Endo R."/>
            <person name="Miyazaki R."/>
            <person name="Ono A."/>
            <person name="Yano K."/>
            <person name="Ito M."/>
            <person name="Sota M."/>
            <person name="Yuji N."/>
            <person name="Hattori M."/>
            <person name="Tsuda M."/>
        </authorList>
    </citation>
    <scope>NUCLEOTIDE SEQUENCE [LARGE SCALE GENOMIC DNA]</scope>
    <source>
        <strain>ATCC 17616 / 249</strain>
    </source>
</reference>
<evidence type="ECO:0000255" key="1">
    <source>
        <dbReference type="HAMAP-Rule" id="MF_00333"/>
    </source>
</evidence>
<organism>
    <name type="scientific">Burkholderia multivorans (strain ATCC 17616 / 249)</name>
    <dbReference type="NCBI Taxonomy" id="395019"/>
    <lineage>
        <taxon>Bacteria</taxon>
        <taxon>Pseudomonadati</taxon>
        <taxon>Pseudomonadota</taxon>
        <taxon>Betaproteobacteria</taxon>
        <taxon>Burkholderiales</taxon>
        <taxon>Burkholderiaceae</taxon>
        <taxon>Burkholderia</taxon>
        <taxon>Burkholderia cepacia complex</taxon>
    </lineage>
</organism>
<gene>
    <name evidence="1" type="primary">hemF</name>
    <name type="ordered locus">Bmul_0982</name>
    <name type="ordered locus">BMULJ_02282</name>
</gene>
<dbReference type="EC" id="1.3.3.3" evidence="1"/>
<dbReference type="EMBL" id="CP000868">
    <property type="protein sequence ID" value="ABX14673.1"/>
    <property type="molecule type" value="Genomic_DNA"/>
</dbReference>
<dbReference type="EMBL" id="AP009385">
    <property type="protein sequence ID" value="BAG44177.1"/>
    <property type="molecule type" value="Genomic_DNA"/>
</dbReference>
<dbReference type="RefSeq" id="WP_012212983.1">
    <property type="nucleotide sequence ID" value="NC_010804.1"/>
</dbReference>
<dbReference type="SMR" id="A9AJJ8"/>
<dbReference type="STRING" id="395019.BMULJ_02282"/>
<dbReference type="GeneID" id="89570827"/>
<dbReference type="KEGG" id="bmj:BMULJ_02282"/>
<dbReference type="KEGG" id="bmu:Bmul_0982"/>
<dbReference type="eggNOG" id="COG0408">
    <property type="taxonomic scope" value="Bacteria"/>
</dbReference>
<dbReference type="HOGENOM" id="CLU_026169_0_1_4"/>
<dbReference type="UniPathway" id="UPA00251">
    <property type="reaction ID" value="UER00322"/>
</dbReference>
<dbReference type="Proteomes" id="UP000008815">
    <property type="component" value="Chromosome 1"/>
</dbReference>
<dbReference type="GO" id="GO:0005737">
    <property type="term" value="C:cytoplasm"/>
    <property type="evidence" value="ECO:0007669"/>
    <property type="project" value="UniProtKB-SubCell"/>
</dbReference>
<dbReference type="GO" id="GO:0004109">
    <property type="term" value="F:coproporphyrinogen oxidase activity"/>
    <property type="evidence" value="ECO:0007669"/>
    <property type="project" value="UniProtKB-UniRule"/>
</dbReference>
<dbReference type="GO" id="GO:0046872">
    <property type="term" value="F:metal ion binding"/>
    <property type="evidence" value="ECO:0007669"/>
    <property type="project" value="UniProtKB-KW"/>
</dbReference>
<dbReference type="GO" id="GO:0042803">
    <property type="term" value="F:protein homodimerization activity"/>
    <property type="evidence" value="ECO:0000250"/>
    <property type="project" value="UniProtKB"/>
</dbReference>
<dbReference type="GO" id="GO:0006782">
    <property type="term" value="P:protoporphyrinogen IX biosynthetic process"/>
    <property type="evidence" value="ECO:0007669"/>
    <property type="project" value="UniProtKB-UniRule"/>
</dbReference>
<dbReference type="FunFam" id="3.40.1500.10:FF:000001">
    <property type="entry name" value="Oxygen-dependent coproporphyrinogen-III oxidase"/>
    <property type="match status" value="1"/>
</dbReference>
<dbReference type="Gene3D" id="3.40.1500.10">
    <property type="entry name" value="Coproporphyrinogen III oxidase, aerobic"/>
    <property type="match status" value="1"/>
</dbReference>
<dbReference type="HAMAP" id="MF_00333">
    <property type="entry name" value="Coprogen_oxidas"/>
    <property type="match status" value="1"/>
</dbReference>
<dbReference type="InterPro" id="IPR001260">
    <property type="entry name" value="Coprogen_oxidase_aer"/>
</dbReference>
<dbReference type="InterPro" id="IPR036406">
    <property type="entry name" value="Coprogen_oxidase_aer_sf"/>
</dbReference>
<dbReference type="InterPro" id="IPR018375">
    <property type="entry name" value="Coprogen_oxidase_CS"/>
</dbReference>
<dbReference type="NCBIfam" id="NF003727">
    <property type="entry name" value="PRK05330.1"/>
    <property type="match status" value="1"/>
</dbReference>
<dbReference type="PANTHER" id="PTHR10755">
    <property type="entry name" value="COPROPORPHYRINOGEN III OXIDASE, MITOCHONDRIAL"/>
    <property type="match status" value="1"/>
</dbReference>
<dbReference type="PANTHER" id="PTHR10755:SF0">
    <property type="entry name" value="OXYGEN-DEPENDENT COPROPORPHYRINOGEN-III OXIDASE, MITOCHONDRIAL"/>
    <property type="match status" value="1"/>
</dbReference>
<dbReference type="Pfam" id="PF01218">
    <property type="entry name" value="Coprogen_oxidas"/>
    <property type="match status" value="1"/>
</dbReference>
<dbReference type="PIRSF" id="PIRSF000166">
    <property type="entry name" value="Coproporphyri_ox"/>
    <property type="match status" value="1"/>
</dbReference>
<dbReference type="PRINTS" id="PR00073">
    <property type="entry name" value="COPRGNOXDASE"/>
</dbReference>
<dbReference type="SUPFAM" id="SSF102886">
    <property type="entry name" value="Coproporphyrinogen III oxidase"/>
    <property type="match status" value="1"/>
</dbReference>
<dbReference type="PROSITE" id="PS01021">
    <property type="entry name" value="COPROGEN_OXIDASE"/>
    <property type="match status" value="1"/>
</dbReference>
<protein>
    <recommendedName>
        <fullName evidence="1">Oxygen-dependent coproporphyrinogen-III oxidase</fullName>
        <shortName evidence="1">CPO</shortName>
        <shortName evidence="1">Coprogen oxidase</shortName>
        <shortName evidence="1">Coproporphyrinogenase</shortName>
        <ecNumber evidence="1">1.3.3.3</ecNumber>
    </recommendedName>
</protein>